<sequence>TEGPYFYIPMSNATGIVRSPYEYPQYYLVYPAAYAVLGAYMFFLIIFGFPVNFLTLYVTIEHKKLRTPLNYILLNLAVADLFMVIGGFTTTIYTSMHGYFVLGRLGCNLEGFSATLGGMIGLWSLVVLAIERWVVVCKPMSNFRFGENHAIMGVTLTWVMGLACTVPPLVGWSRYIPEGMQCSCGIDYYTRAEGFNNDSYVLYMFVCHFLIPLVVIFFCYGRLLCAVKEAAAAQQESETTQRAEREVTRMVILMVIGFLVCWLPYASVAWYIFTHQGSEFGPLFMTIPAFFAKSSSIYNPVIYICMNKQFRQCMLTTLFCGKNPFEEEEGASSTKTEASSASSSSVSPA</sequence>
<accession>P79807</accession>
<reference key="1">
    <citation type="submission" date="1997-01" db="EMBL/GenBank/DDBJ databases">
        <title>Molecular phylogeny of 11 holocentrid fishes (Order Beryciformes) inferred from rhodopsin cDNA and cytochrome b.</title>
        <authorList>
            <person name="Toller W.W."/>
            <person name="Moses K."/>
            <person name="McFall-Ngai M.J."/>
        </authorList>
    </citation>
    <scope>NUCLEOTIDE SEQUENCE [MRNA]</scope>
    <source>
        <tissue>Eye</tissue>
    </source>
</reference>
<feature type="chain" id="PRO_0000197691" description="Rhodopsin">
    <location>
        <begin position="1" status="less than"/>
        <end position="349"/>
    </location>
</feature>
<feature type="topological domain" description="Extracellular" evidence="8">
    <location>
        <begin position="1" status="less than"/>
        <end position="33"/>
    </location>
</feature>
<feature type="transmembrane region" description="Helical; Name=1" evidence="1">
    <location>
        <begin position="34"/>
        <end position="58"/>
    </location>
</feature>
<feature type="topological domain" description="Cytoplasmic" evidence="8">
    <location>
        <begin position="59"/>
        <end position="70"/>
    </location>
</feature>
<feature type="transmembrane region" description="Helical; Name=2" evidence="1">
    <location>
        <begin position="71"/>
        <end position="93"/>
    </location>
</feature>
<feature type="topological domain" description="Extracellular" evidence="8">
    <location>
        <begin position="94"/>
        <end position="107"/>
    </location>
</feature>
<feature type="transmembrane region" description="Helical; Name=3" evidence="1">
    <location>
        <begin position="108"/>
        <end position="130"/>
    </location>
</feature>
<feature type="topological domain" description="Cytoplasmic" evidence="8">
    <location>
        <begin position="131"/>
        <end position="149"/>
    </location>
</feature>
<feature type="transmembrane region" description="Helical; Name=4" evidence="1">
    <location>
        <begin position="150"/>
        <end position="170"/>
    </location>
</feature>
<feature type="topological domain" description="Extracellular" evidence="8">
    <location>
        <begin position="171"/>
        <end position="199"/>
    </location>
</feature>
<feature type="transmembrane region" description="Helical; Name=5" evidence="1">
    <location>
        <begin position="200"/>
        <end position="221"/>
    </location>
</feature>
<feature type="topological domain" description="Cytoplasmic" evidence="8">
    <location>
        <begin position="222"/>
        <end position="249"/>
    </location>
</feature>
<feature type="transmembrane region" description="Helical; Name=6" evidence="1">
    <location>
        <begin position="250"/>
        <end position="271"/>
    </location>
</feature>
<feature type="topological domain" description="Extracellular" evidence="8">
    <location>
        <begin position="272"/>
        <end position="283"/>
    </location>
</feature>
<feature type="transmembrane region" description="Helical; Name=7" evidence="1">
    <location>
        <begin position="284"/>
        <end position="305"/>
    </location>
</feature>
<feature type="topological domain" description="Cytoplasmic" evidence="8">
    <location>
        <begin position="306"/>
        <end position="349"/>
    </location>
</feature>
<feature type="region of interest" description="Disordered" evidence="7">
    <location>
        <begin position="326"/>
        <end position="349"/>
    </location>
</feature>
<feature type="short sequence motif" description="'Ionic lock' involved in activated form stabilization" evidence="1">
    <location>
        <begin position="131"/>
        <end position="133"/>
    </location>
</feature>
<feature type="compositionally biased region" description="Low complexity" evidence="7">
    <location>
        <begin position="331"/>
        <end position="349"/>
    </location>
</feature>
<feature type="site" description="Plays an important role in the conformation switch to the active conformation" evidence="1">
    <location>
        <position position="110"/>
    </location>
</feature>
<feature type="modified residue" description="N6-(retinylidene)lysine" evidence="1">
    <location>
        <position position="293"/>
    </location>
</feature>
<feature type="lipid moiety-binding region" description="S-palmitoyl cysteine" evidence="1">
    <location>
        <position position="320"/>
    </location>
</feature>
<feature type="glycosylation site" description="N-linked (GlcNAc...) asparagine" evidence="5">
    <location>
        <position position="12"/>
    </location>
</feature>
<feature type="glycosylation site" description="N-linked (GlcNAc...) asparagine" evidence="5">
    <location>
        <position position="197"/>
    </location>
</feature>
<feature type="disulfide bond" evidence="6">
    <location>
        <begin position="107"/>
        <end position="184"/>
    </location>
</feature>
<feature type="non-terminal residue">
    <location>
        <position position="1"/>
    </location>
</feature>
<comment type="function">
    <text evidence="1 2 3">Photoreceptor required for image-forming vision at low light intensity. While most salt water fish species use retinal as chromophore, most freshwater fish use 3-dehydroretinal, or a mixture of retinal and 3-dehydroretinal (By similarity). Light-induced isomerization of 11-cis to all-trans retinal triggers a conformational change that activates signaling via G-proteins. Subsequent receptor phosphorylation mediates displacement of the bound G-protein alpha subunit by arrestin and terminates signaling (By similarity).</text>
</comment>
<comment type="subcellular location">
    <subcellularLocation>
        <location evidence="2">Membrane</location>
        <topology evidence="2">Multi-pass membrane protein</topology>
    </subcellularLocation>
    <subcellularLocation>
        <location evidence="4">Cell projection</location>
        <location evidence="4">Cilium</location>
        <location evidence="4">Photoreceptor outer segment</location>
    </subcellularLocation>
    <text evidence="2">Synthesized in the inner segment (IS) of rod photoreceptor cells before vectorial transport to disk membranes in the rod outer segment (OS) photosensory cilia.</text>
</comment>
<comment type="PTM">
    <text evidence="1">Phosphorylated on some or all of the serine and threonine residues present in the C-terminal region.</text>
</comment>
<comment type="PTM">
    <text evidence="1">Contains one covalently linked retinal chromophore.</text>
</comment>
<comment type="similarity">
    <text evidence="6">Belongs to the G-protein coupled receptor 1 family. Opsin subfamily.</text>
</comment>
<gene>
    <name type="primary">rho</name>
</gene>
<keyword id="KW-0966">Cell projection</keyword>
<keyword id="KW-0157">Chromophore</keyword>
<keyword id="KW-1015">Disulfide bond</keyword>
<keyword id="KW-0297">G-protein coupled receptor</keyword>
<keyword id="KW-0325">Glycoprotein</keyword>
<keyword id="KW-0449">Lipoprotein</keyword>
<keyword id="KW-0472">Membrane</keyword>
<keyword id="KW-0564">Palmitate</keyword>
<keyword id="KW-0597">Phosphoprotein</keyword>
<keyword id="KW-0600">Photoreceptor protein</keyword>
<keyword id="KW-0675">Receptor</keyword>
<keyword id="KW-0681">Retinal protein</keyword>
<keyword id="KW-0716">Sensory transduction</keyword>
<keyword id="KW-0807">Transducer</keyword>
<keyword id="KW-0812">Transmembrane</keyword>
<keyword id="KW-1133">Transmembrane helix</keyword>
<keyword id="KW-0844">Vision</keyword>
<evidence type="ECO:0000250" key="1">
    <source>
        <dbReference type="UniProtKB" id="P02699"/>
    </source>
</evidence>
<evidence type="ECO:0000250" key="2">
    <source>
        <dbReference type="UniProtKB" id="P08100"/>
    </source>
</evidence>
<evidence type="ECO:0000250" key="3">
    <source>
        <dbReference type="UniProtKB" id="P32309"/>
    </source>
</evidence>
<evidence type="ECO:0000250" key="4">
    <source>
        <dbReference type="UniProtKB" id="P35359"/>
    </source>
</evidence>
<evidence type="ECO:0000255" key="5"/>
<evidence type="ECO:0000255" key="6">
    <source>
        <dbReference type="PROSITE-ProRule" id="PRU00521"/>
    </source>
</evidence>
<evidence type="ECO:0000256" key="7">
    <source>
        <dbReference type="SAM" id="MobiDB-lite"/>
    </source>
</evidence>
<evidence type="ECO:0000305" key="8"/>
<organism>
    <name type="scientific">Myripristis violacea</name>
    <name type="common">Lattice soldierfish</name>
    <dbReference type="NCBI Taxonomy" id="47701"/>
    <lineage>
        <taxon>Eukaryota</taxon>
        <taxon>Metazoa</taxon>
        <taxon>Chordata</taxon>
        <taxon>Craniata</taxon>
        <taxon>Vertebrata</taxon>
        <taxon>Euteleostomi</taxon>
        <taxon>Actinopterygii</taxon>
        <taxon>Neopterygii</taxon>
        <taxon>Teleostei</taxon>
        <taxon>Neoteleostei</taxon>
        <taxon>Acanthomorphata</taxon>
        <taxon>Holocentriformes</taxon>
        <taxon>Holocentridae</taxon>
        <taxon>Myripristis</taxon>
    </lineage>
</organism>
<protein>
    <recommendedName>
        <fullName>Rhodopsin</fullName>
    </recommendedName>
</protein>
<proteinExistence type="evidence at transcript level"/>
<dbReference type="EMBL" id="U57539">
    <property type="protein sequence ID" value="AAB39518.1"/>
    <property type="molecule type" value="mRNA"/>
</dbReference>
<dbReference type="SMR" id="P79807"/>
<dbReference type="GlyCosmos" id="P79807">
    <property type="glycosylation" value="2 sites, No reported glycans"/>
</dbReference>
<dbReference type="GO" id="GO:0016020">
    <property type="term" value="C:membrane"/>
    <property type="evidence" value="ECO:0000250"/>
    <property type="project" value="UniProtKB"/>
</dbReference>
<dbReference type="GO" id="GO:0097381">
    <property type="term" value="C:photoreceptor disc membrane"/>
    <property type="evidence" value="ECO:0000250"/>
    <property type="project" value="UniProtKB"/>
</dbReference>
<dbReference type="GO" id="GO:0005886">
    <property type="term" value="C:plasma membrane"/>
    <property type="evidence" value="ECO:0000250"/>
    <property type="project" value="UniProtKB"/>
</dbReference>
<dbReference type="GO" id="GO:0005502">
    <property type="term" value="F:11-cis retinal binding"/>
    <property type="evidence" value="ECO:0000250"/>
    <property type="project" value="UniProtKB"/>
</dbReference>
<dbReference type="GO" id="GO:0008020">
    <property type="term" value="F:G protein-coupled photoreceptor activity"/>
    <property type="evidence" value="ECO:0000250"/>
    <property type="project" value="UniProtKB"/>
</dbReference>
<dbReference type="GO" id="GO:0016038">
    <property type="term" value="P:absorption of visible light"/>
    <property type="evidence" value="ECO:0000250"/>
    <property type="project" value="UniProtKB"/>
</dbReference>
<dbReference type="GO" id="GO:0016056">
    <property type="term" value="P:G protein-coupled opsin signaling pathway"/>
    <property type="evidence" value="ECO:0000250"/>
    <property type="project" value="UniProtKB"/>
</dbReference>
<dbReference type="GO" id="GO:0007601">
    <property type="term" value="P:visual perception"/>
    <property type="evidence" value="ECO:0007669"/>
    <property type="project" value="UniProtKB-KW"/>
</dbReference>
<dbReference type="CDD" id="cd15080">
    <property type="entry name" value="7tmA_MWS_opsin"/>
    <property type="match status" value="1"/>
</dbReference>
<dbReference type="FunFam" id="1.20.1070.10:FF:000018">
    <property type="entry name" value="Rhodopsin"/>
    <property type="match status" value="1"/>
</dbReference>
<dbReference type="Gene3D" id="1.20.1070.10">
    <property type="entry name" value="Rhodopsin 7-helix transmembrane proteins"/>
    <property type="match status" value="1"/>
</dbReference>
<dbReference type="InterPro" id="IPR050125">
    <property type="entry name" value="GPCR_opsins"/>
</dbReference>
<dbReference type="InterPro" id="IPR000276">
    <property type="entry name" value="GPCR_Rhodpsn"/>
</dbReference>
<dbReference type="InterPro" id="IPR017452">
    <property type="entry name" value="GPCR_Rhodpsn_7TM"/>
</dbReference>
<dbReference type="InterPro" id="IPR001760">
    <property type="entry name" value="Opsin"/>
</dbReference>
<dbReference type="InterPro" id="IPR027430">
    <property type="entry name" value="Retinal_BS"/>
</dbReference>
<dbReference type="InterPro" id="IPR000732">
    <property type="entry name" value="Rhodopsin"/>
</dbReference>
<dbReference type="InterPro" id="IPR019477">
    <property type="entry name" value="Rhodopsin_N"/>
</dbReference>
<dbReference type="PANTHER" id="PTHR24240">
    <property type="entry name" value="OPSIN"/>
    <property type="match status" value="1"/>
</dbReference>
<dbReference type="Pfam" id="PF00001">
    <property type="entry name" value="7tm_1"/>
    <property type="match status" value="1"/>
</dbReference>
<dbReference type="Pfam" id="PF10413">
    <property type="entry name" value="Rhodopsin_N"/>
    <property type="match status" value="1"/>
</dbReference>
<dbReference type="PRINTS" id="PR00237">
    <property type="entry name" value="GPCRRHODOPSN"/>
</dbReference>
<dbReference type="PRINTS" id="PR00238">
    <property type="entry name" value="OPSIN"/>
</dbReference>
<dbReference type="PRINTS" id="PR00579">
    <property type="entry name" value="RHODOPSIN"/>
</dbReference>
<dbReference type="SUPFAM" id="SSF81321">
    <property type="entry name" value="Family A G protein-coupled receptor-like"/>
    <property type="match status" value="1"/>
</dbReference>
<dbReference type="PROSITE" id="PS00237">
    <property type="entry name" value="G_PROTEIN_RECEP_F1_1"/>
    <property type="match status" value="1"/>
</dbReference>
<dbReference type="PROSITE" id="PS50262">
    <property type="entry name" value="G_PROTEIN_RECEP_F1_2"/>
    <property type="match status" value="1"/>
</dbReference>
<dbReference type="PROSITE" id="PS00238">
    <property type="entry name" value="OPSIN"/>
    <property type="match status" value="1"/>
</dbReference>
<name>OPSD_MYRVI</name>